<feature type="initiator methionine" description="Removed" evidence="3">
    <location>
        <position position="1"/>
    </location>
</feature>
<feature type="chain" id="PRO_0000221329" description="Histone H3">
    <location>
        <begin position="2"/>
        <end position="136"/>
    </location>
</feature>
<feature type="chain" id="PRO_0000385009" description="H3F">
    <location>
        <begin position="8"/>
        <end position="136"/>
    </location>
</feature>
<feature type="region of interest" description="Disordered" evidence="2">
    <location>
        <begin position="1"/>
        <end position="43"/>
    </location>
</feature>
<feature type="modified residue" description="N6,N6,N6-trimethyllysine; alternate" evidence="1">
    <location>
        <position position="5"/>
    </location>
</feature>
<feature type="modified residue" description="N6,N6-dimethyllysine; alternate" evidence="1">
    <location>
        <position position="5"/>
    </location>
</feature>
<feature type="modified residue" description="N6-acetyllysine; alternate" evidence="1">
    <location>
        <position position="5"/>
    </location>
</feature>
<feature type="modified residue" description="N6-methyllysine; alternate" evidence="1">
    <location>
        <position position="5"/>
    </location>
</feature>
<feature type="modified residue" description="N6,N6,N6-trimethyllysine; alternate" evidence="1">
    <location>
        <position position="10"/>
    </location>
</feature>
<feature type="modified residue" description="N6-acetyllysine; alternate" evidence="3">
    <location>
        <position position="10"/>
    </location>
</feature>
<feature type="modified residue" description="Phosphoserine" evidence="1">
    <location>
        <position position="11"/>
    </location>
</feature>
<feature type="modified residue" description="N6-acetyllysine" evidence="3">
    <location>
        <position position="15"/>
    </location>
</feature>
<feature type="modified residue" description="N6-acetyllysine" evidence="3">
    <location>
        <position position="19"/>
    </location>
</feature>
<feature type="modified residue" description="N6-acetyllysine" evidence="3">
    <location>
        <position position="24"/>
    </location>
</feature>
<feature type="modified residue" description="N6,N6,N6-trimethyllysine; alternate" evidence="1">
    <location>
        <position position="28"/>
    </location>
</feature>
<feature type="modified residue" description="N6,N6-dimethyllysine; alternate" evidence="1">
    <location>
        <position position="28"/>
    </location>
</feature>
<feature type="modified residue" description="N6-acetyllysine; alternate" evidence="1">
    <location>
        <position position="28"/>
    </location>
</feature>
<feature type="modified residue" description="N6-methyllysine; alternate" evidence="1">
    <location>
        <position position="28"/>
    </location>
</feature>
<feature type="modified residue" description="N6,N6,N6-trimethyllysine; alternate" evidence="1">
    <location>
        <position position="37"/>
    </location>
</feature>
<feature type="modified residue" description="N6,N6-dimethyllysine; alternate" evidence="1">
    <location>
        <position position="37"/>
    </location>
</feature>
<feature type="modified residue" description="N6-acetyllysine; alternate" evidence="1">
    <location>
        <position position="37"/>
    </location>
</feature>
<feature type="modified residue" description="N6-methyllysine; alternate" evidence="1">
    <location>
        <position position="37"/>
    </location>
</feature>
<feature type="modified residue" description="N6-acetyllysine; alternate" evidence="1">
    <location>
        <position position="57"/>
    </location>
</feature>
<feature type="modified residue" description="N6-methyllysine; alternate" evidence="1">
    <location>
        <position position="57"/>
    </location>
</feature>
<feature type="modified residue" description="N6-methyllysine" evidence="1">
    <location>
        <position position="80"/>
    </location>
</feature>
<dbReference type="EMBL" id="X17141">
    <property type="protein sequence ID" value="CAA35016.1"/>
    <property type="molecule type" value="Genomic_DNA"/>
</dbReference>
<dbReference type="PIR" id="A28852">
    <property type="entry name" value="A28852"/>
</dbReference>
<dbReference type="SMR" id="P69149"/>
<dbReference type="iPTMnet" id="P69149"/>
<dbReference type="GO" id="GO:0000786">
    <property type="term" value="C:nucleosome"/>
    <property type="evidence" value="ECO:0007669"/>
    <property type="project" value="UniProtKB-KW"/>
</dbReference>
<dbReference type="GO" id="GO:0005634">
    <property type="term" value="C:nucleus"/>
    <property type="evidence" value="ECO:0007669"/>
    <property type="project" value="UniProtKB-SubCell"/>
</dbReference>
<dbReference type="GO" id="GO:0003677">
    <property type="term" value="F:DNA binding"/>
    <property type="evidence" value="ECO:0007669"/>
    <property type="project" value="UniProtKB-KW"/>
</dbReference>
<dbReference type="GO" id="GO:0046982">
    <property type="term" value="F:protein heterodimerization activity"/>
    <property type="evidence" value="ECO:0007669"/>
    <property type="project" value="InterPro"/>
</dbReference>
<dbReference type="GO" id="GO:0030527">
    <property type="term" value="F:structural constituent of chromatin"/>
    <property type="evidence" value="ECO:0007669"/>
    <property type="project" value="InterPro"/>
</dbReference>
<dbReference type="CDD" id="cd22911">
    <property type="entry name" value="HFD_H3"/>
    <property type="match status" value="1"/>
</dbReference>
<dbReference type="FunFam" id="1.10.20.10:FF:000001">
    <property type="entry name" value="Histone H3"/>
    <property type="match status" value="1"/>
</dbReference>
<dbReference type="Gene3D" id="1.10.20.10">
    <property type="entry name" value="Histone, subunit A"/>
    <property type="match status" value="1"/>
</dbReference>
<dbReference type="InterPro" id="IPR009072">
    <property type="entry name" value="Histone-fold"/>
</dbReference>
<dbReference type="InterPro" id="IPR007125">
    <property type="entry name" value="Histone_H2A/H2B/H3"/>
</dbReference>
<dbReference type="InterPro" id="IPR000164">
    <property type="entry name" value="Histone_H3/CENP-A"/>
</dbReference>
<dbReference type="PANTHER" id="PTHR11426">
    <property type="entry name" value="HISTONE H3"/>
    <property type="match status" value="1"/>
</dbReference>
<dbReference type="Pfam" id="PF00125">
    <property type="entry name" value="Histone"/>
    <property type="match status" value="1"/>
</dbReference>
<dbReference type="PRINTS" id="PR00622">
    <property type="entry name" value="HISTONEH3"/>
</dbReference>
<dbReference type="SMART" id="SM00428">
    <property type="entry name" value="H3"/>
    <property type="match status" value="1"/>
</dbReference>
<dbReference type="SUPFAM" id="SSF47113">
    <property type="entry name" value="Histone-fold"/>
    <property type="match status" value="1"/>
</dbReference>
<dbReference type="PROSITE" id="PS00322">
    <property type="entry name" value="HISTONE_H3_1"/>
    <property type="match status" value="1"/>
</dbReference>
<dbReference type="PROSITE" id="PS00959">
    <property type="entry name" value="HISTONE_H3_2"/>
    <property type="match status" value="1"/>
</dbReference>
<evidence type="ECO:0000250" key="1"/>
<evidence type="ECO:0000256" key="2">
    <source>
        <dbReference type="SAM" id="MobiDB-lite"/>
    </source>
</evidence>
<evidence type="ECO:0000269" key="3">
    <source>
    </source>
</evidence>
<evidence type="ECO:0000305" key="4"/>
<organism>
    <name type="scientific">Tetrahymena pyriformis</name>
    <dbReference type="NCBI Taxonomy" id="5908"/>
    <lineage>
        <taxon>Eukaryota</taxon>
        <taxon>Sar</taxon>
        <taxon>Alveolata</taxon>
        <taxon>Ciliophora</taxon>
        <taxon>Intramacronucleata</taxon>
        <taxon>Oligohymenophorea</taxon>
        <taxon>Hymenostomatida</taxon>
        <taxon>Tetrahymenina</taxon>
        <taxon>Tetrahymenidae</taxon>
        <taxon>Tetrahymena</taxon>
    </lineage>
</organism>
<reference key="1">
    <citation type="journal article" date="1984" name="J. Biochem.">
        <title>Tetrahymena histone H3. Purification and two variant sequences.</title>
        <authorList>
            <person name="Hayashi T."/>
            <person name="Hayashi H."/>
            <person name="Fusauchi Y."/>
            <person name="Iwai K."/>
        </authorList>
    </citation>
    <scope>PROTEIN SEQUENCE OF 2-136</scope>
    <scope>ACETYLATION AT LYS-10; LYS-15; LYS-19 AND LYS-24</scope>
    <scope>METHYLATION AT LYS-5 AND LYS-28</scope>
</reference>
<reference key="2">
    <citation type="journal article" date="1990" name="Nucleic Acids Res.">
        <title>Characterization of the promoter region of Tetrahymena genes.</title>
        <authorList>
            <person name="Brunk C.F."/>
            <person name="Sadler L.A."/>
        </authorList>
    </citation>
    <scope>NUCLEOTIDE SEQUENCE [GENOMIC DNA] OF 1-42</scope>
</reference>
<reference key="3">
    <citation type="journal article" date="1990" name="J. Mol. Evol.">
        <title>Phylogenetic relationships among Tetrahymena species determined using the polymerase chain reaction.</title>
        <authorList>
            <person name="Brunk C.F."/>
            <person name="Kahn R.W."/>
            <person name="Sadler L.A."/>
        </authorList>
    </citation>
    <scope>NUCLEOTIDE SEQUENCE [GENOMIC DNA] OF 1-42</scope>
</reference>
<name>H31_TETPY</name>
<keyword id="KW-0007">Acetylation</keyword>
<keyword id="KW-0158">Chromosome</keyword>
<keyword id="KW-0903">Direct protein sequencing</keyword>
<keyword id="KW-0238">DNA-binding</keyword>
<keyword id="KW-0488">Methylation</keyword>
<keyword id="KW-0544">Nucleosome core</keyword>
<keyword id="KW-0539">Nucleus</keyword>
<keyword id="KW-0597">Phosphoprotein</keyword>
<comment type="function">
    <text>Core component of nucleosome. Nucleosomes wrap and compact DNA into chromatin, limiting DNA accessibility to the cellular machineries which require DNA as a template. Histones thereby play a central role in transcription regulation, DNA repair, DNA replication and chromosomal stability. DNA accessibility is regulated via a complex set of post-translational modifications of histones, also called histone code, and nucleosome remodeling.</text>
</comment>
<comment type="subunit">
    <text>The nucleosome is a histone octamer containing two molecules each of H2A, H2B, H3 and H4 assembled in one H3-H4 heterotetramer and two H2A-H2B heterodimers. The octamer wraps approximately 147 bp of DNA.</text>
</comment>
<comment type="subcellular location">
    <subcellularLocation>
        <location>Nucleus</location>
    </subcellularLocation>
    <subcellularLocation>
        <location evidence="1">Chromosome</location>
    </subcellularLocation>
    <text evidence="1">Localizes to both the large, transcriptionally active, somatic macronucleus (MAC) and the small, transcriptionally inert, germ line micronucleus (MIC).</text>
</comment>
<comment type="induction">
    <text evidence="1">Highly expressed in growing cells, but only at low levels in starved cells.</text>
</comment>
<comment type="PTM">
    <text evidence="1">Phosphorylated to form H3S10ph. H3S10ph promotes subsequent H3K14ac formation by GCN5. H3S10ph is only found in the mitotically dividing MIC, but not in the amitotically dividing MAC. H3S10ph is correlated with chromosome condensation during mitotic or meiotic micronuclear divisions (By similarity).</text>
</comment>
<comment type="PTM">
    <text evidence="1">Acetylation of histone H3 leads to transcriptional activation. H3K14ac formation by GCN5 is promoted by H3S10ph. H3K9acK14ac is the preferred acetylated form of newly synthesized H3. Acetylation occurs almost exclusively in the MAC (By similarity).</text>
</comment>
<comment type="PTM">
    <text evidence="1">Methylated to form H3K4me. H3K4me is only found in the transcriptionally active MAC. Methylated to form H3K9me in developing MACs during conjugation, when genome-wide DNA elimination occurs. At this stage, H3K9me specifically occurs on DNA sequences being eliminated (IES), probably targeted by small scan RNAs (scnRNAs) bound to IES, and is required for efficient IES elimination. H3K9me is required for the interaction with the chromodomains of PDD1 and PDD3 (By similarity).</text>
</comment>
<comment type="PTM">
    <text evidence="1">The full-length protein H3S (slow migrating) is converted to H3F (fast migrating) by proteolytic removal of the first 6 residues. H3F is unique to MIC, and processing seems to occur regularly each generation at a specific point in the cell cycle (By similarity).</text>
</comment>
<comment type="similarity">
    <text evidence="4">Belongs to the histone H3 family.</text>
</comment>
<comment type="caution">
    <text evidence="4">To ensure consistency between histone entries, we follow the 'Brno' nomenclature for histone modifications, with positions referring to those used in the literature for the 'closest' model organism. Due to slight variations in histone sequences between organisms and to the presence of initiator methionine in UniProtKB/Swiss-Prot sequences, the actual positions of modified amino acids in the sequence generally differ. In this entry the following conventions are used: H3K4ac = acetylated Lys-5; H3K4me1/2/3 = mono-, di- and trimethylated Lys-5; H3K9ac = acetylated Lys-10; H3K9me3 = trimethylated Lys-10; H3S10ph = phosphorylated Ser-11; H3K14ac = acetylated Lys-15; H3K18ac = acetylated Lys-19; H3K23ac = acetylated Lys-24; H3K27ac = acetylated Lys-28; H3K27me1/2/3 = mono-, di- and trimethylated Lys-28; H3K36ac = acetylated Lys-37; H3K36me1/3/3 = mono-, di- and trimethylated Lys-37; H3K56ac = acetylated Lys-57; H3K56me1 = monomethylated Lys-57; H3K79me1 = monomethylated Lys-80.</text>
</comment>
<proteinExistence type="evidence at protein level"/>
<sequence length="136" mass="15429">MARTKQTARKSTGAKAPRKQLASKAARKSAPATGGIKKPHRFRPGTVALREIRKYQKSTDLLIRKLPFQRLVRDIAHEFKAELRFQSSAVLALQEAAEAYLVGLFEDTNLCAIHARRVTIMTKDMQLARRIRGERF</sequence>
<accession>P69149</accession>
<accession>P15511</accession>
<protein>
    <recommendedName>
        <fullName>Histone H3</fullName>
    </recommendedName>
    <alternativeName>
        <fullName>H3S</fullName>
    </alternativeName>
    <alternativeName>
        <fullName>Major histone H3</fullName>
    </alternativeName>
    <component>
        <recommendedName>
            <fullName>H3F</fullName>
        </recommendedName>
    </component>
</protein>